<name>DTD_ALKEH</name>
<accession>Q0A5C9</accession>
<organism>
    <name type="scientific">Alkalilimnicola ehrlichii (strain ATCC BAA-1101 / DSM 17681 / MLHE-1)</name>
    <dbReference type="NCBI Taxonomy" id="187272"/>
    <lineage>
        <taxon>Bacteria</taxon>
        <taxon>Pseudomonadati</taxon>
        <taxon>Pseudomonadota</taxon>
        <taxon>Gammaproteobacteria</taxon>
        <taxon>Chromatiales</taxon>
        <taxon>Ectothiorhodospiraceae</taxon>
        <taxon>Alkalilimnicola</taxon>
    </lineage>
</organism>
<evidence type="ECO:0000255" key="1">
    <source>
        <dbReference type="HAMAP-Rule" id="MF_00518"/>
    </source>
</evidence>
<protein>
    <recommendedName>
        <fullName evidence="1">D-aminoacyl-tRNA deacylase</fullName>
        <shortName evidence="1">DTD</shortName>
        <ecNumber evidence="1">3.1.1.96</ecNumber>
    </recommendedName>
    <alternativeName>
        <fullName evidence="1">Gly-tRNA(Ala) deacylase</fullName>
    </alternativeName>
</protein>
<gene>
    <name evidence="1" type="primary">dtd</name>
    <name type="ordered locus">Mlg_2618</name>
</gene>
<comment type="function">
    <text evidence="1">An aminoacyl-tRNA editing enzyme that deacylates mischarged D-aminoacyl-tRNAs. Also deacylates mischarged glycyl-tRNA(Ala), protecting cells against glycine mischarging by AlaRS. Acts via tRNA-based rather than protein-based catalysis; rejects L-amino acids rather than detecting D-amino acids in the active site. By recycling D-aminoacyl-tRNA to D-amino acids and free tRNA molecules, this enzyme counteracts the toxicity associated with the formation of D-aminoacyl-tRNA entities in vivo and helps enforce protein L-homochirality.</text>
</comment>
<comment type="catalytic activity">
    <reaction evidence="1">
        <text>glycyl-tRNA(Ala) + H2O = tRNA(Ala) + glycine + H(+)</text>
        <dbReference type="Rhea" id="RHEA:53744"/>
        <dbReference type="Rhea" id="RHEA-COMP:9657"/>
        <dbReference type="Rhea" id="RHEA-COMP:13640"/>
        <dbReference type="ChEBI" id="CHEBI:15377"/>
        <dbReference type="ChEBI" id="CHEBI:15378"/>
        <dbReference type="ChEBI" id="CHEBI:57305"/>
        <dbReference type="ChEBI" id="CHEBI:78442"/>
        <dbReference type="ChEBI" id="CHEBI:78522"/>
        <dbReference type="EC" id="3.1.1.96"/>
    </reaction>
</comment>
<comment type="catalytic activity">
    <reaction evidence="1">
        <text>a D-aminoacyl-tRNA + H2O = a tRNA + a D-alpha-amino acid + H(+)</text>
        <dbReference type="Rhea" id="RHEA:13953"/>
        <dbReference type="Rhea" id="RHEA-COMP:10123"/>
        <dbReference type="Rhea" id="RHEA-COMP:10124"/>
        <dbReference type="ChEBI" id="CHEBI:15377"/>
        <dbReference type="ChEBI" id="CHEBI:15378"/>
        <dbReference type="ChEBI" id="CHEBI:59871"/>
        <dbReference type="ChEBI" id="CHEBI:78442"/>
        <dbReference type="ChEBI" id="CHEBI:79333"/>
        <dbReference type="EC" id="3.1.1.96"/>
    </reaction>
</comment>
<comment type="subunit">
    <text evidence="1">Homodimer.</text>
</comment>
<comment type="subcellular location">
    <subcellularLocation>
        <location evidence="1">Cytoplasm</location>
    </subcellularLocation>
</comment>
<comment type="domain">
    <text evidence="1">A Gly-cisPro motif from one monomer fits into the active site of the other monomer to allow specific chiral rejection of L-amino acids.</text>
</comment>
<comment type="similarity">
    <text evidence="1">Belongs to the DTD family.</text>
</comment>
<sequence>MIGLIQRVREARVEVDGVVVGRTGRGLLALIGVQRDDDEPQARRLLERILGYRVFPDEAGRMNRSVRDIGGGLLLVPQFTLAADTRKGMRASFAPAASPERGEALFHRLLGLARESGVPVEAGRFAADMQVHLINDGPVTFWLEARPSAA</sequence>
<proteinExistence type="inferred from homology"/>
<keyword id="KW-0963">Cytoplasm</keyword>
<keyword id="KW-0378">Hydrolase</keyword>
<keyword id="KW-1185">Reference proteome</keyword>
<keyword id="KW-0694">RNA-binding</keyword>
<keyword id="KW-0820">tRNA-binding</keyword>
<dbReference type="EC" id="3.1.1.96" evidence="1"/>
<dbReference type="EMBL" id="CP000453">
    <property type="protein sequence ID" value="ABI57958.1"/>
    <property type="molecule type" value="Genomic_DNA"/>
</dbReference>
<dbReference type="RefSeq" id="WP_011630351.1">
    <property type="nucleotide sequence ID" value="NC_008340.1"/>
</dbReference>
<dbReference type="SMR" id="Q0A5C9"/>
<dbReference type="KEGG" id="aeh:Mlg_2618"/>
<dbReference type="eggNOG" id="COG1490">
    <property type="taxonomic scope" value="Bacteria"/>
</dbReference>
<dbReference type="HOGENOM" id="CLU_076901_1_1_6"/>
<dbReference type="OrthoDB" id="9801395at2"/>
<dbReference type="Proteomes" id="UP000001962">
    <property type="component" value="Chromosome"/>
</dbReference>
<dbReference type="GO" id="GO:0005737">
    <property type="term" value="C:cytoplasm"/>
    <property type="evidence" value="ECO:0007669"/>
    <property type="project" value="UniProtKB-SubCell"/>
</dbReference>
<dbReference type="GO" id="GO:0051500">
    <property type="term" value="F:D-tyrosyl-tRNA(Tyr) deacylase activity"/>
    <property type="evidence" value="ECO:0007669"/>
    <property type="project" value="TreeGrafter"/>
</dbReference>
<dbReference type="GO" id="GO:0106026">
    <property type="term" value="F:Gly-tRNA(Ala) deacylase activity"/>
    <property type="evidence" value="ECO:0007669"/>
    <property type="project" value="UniProtKB-UniRule"/>
</dbReference>
<dbReference type="GO" id="GO:0043908">
    <property type="term" value="F:Ser(Gly)-tRNA(Ala) hydrolase activity"/>
    <property type="evidence" value="ECO:0007669"/>
    <property type="project" value="UniProtKB-UniRule"/>
</dbReference>
<dbReference type="GO" id="GO:0000049">
    <property type="term" value="F:tRNA binding"/>
    <property type="evidence" value="ECO:0007669"/>
    <property type="project" value="UniProtKB-UniRule"/>
</dbReference>
<dbReference type="GO" id="GO:0019478">
    <property type="term" value="P:D-amino acid catabolic process"/>
    <property type="evidence" value="ECO:0007669"/>
    <property type="project" value="UniProtKB-UniRule"/>
</dbReference>
<dbReference type="FunFam" id="3.50.80.10:FF:000001">
    <property type="entry name" value="D-aminoacyl-tRNA deacylase"/>
    <property type="match status" value="1"/>
</dbReference>
<dbReference type="Gene3D" id="3.50.80.10">
    <property type="entry name" value="D-tyrosyl-tRNA(Tyr) deacylase"/>
    <property type="match status" value="1"/>
</dbReference>
<dbReference type="HAMAP" id="MF_00518">
    <property type="entry name" value="Deacylase_Dtd"/>
    <property type="match status" value="1"/>
</dbReference>
<dbReference type="InterPro" id="IPR003732">
    <property type="entry name" value="Daa-tRNA_deacyls_DTD"/>
</dbReference>
<dbReference type="InterPro" id="IPR023509">
    <property type="entry name" value="DTD-like_sf"/>
</dbReference>
<dbReference type="NCBIfam" id="TIGR00256">
    <property type="entry name" value="D-aminoacyl-tRNA deacylase"/>
    <property type="match status" value="1"/>
</dbReference>
<dbReference type="PANTHER" id="PTHR10472:SF5">
    <property type="entry name" value="D-AMINOACYL-TRNA DEACYLASE 1"/>
    <property type="match status" value="1"/>
</dbReference>
<dbReference type="PANTHER" id="PTHR10472">
    <property type="entry name" value="D-TYROSYL-TRNA TYR DEACYLASE"/>
    <property type="match status" value="1"/>
</dbReference>
<dbReference type="Pfam" id="PF02580">
    <property type="entry name" value="Tyr_Deacylase"/>
    <property type="match status" value="1"/>
</dbReference>
<dbReference type="SUPFAM" id="SSF69500">
    <property type="entry name" value="DTD-like"/>
    <property type="match status" value="1"/>
</dbReference>
<reference key="1">
    <citation type="submission" date="2006-08" db="EMBL/GenBank/DDBJ databases">
        <title>Complete sequence of Alkalilimnicola ehrilichei MLHE-1.</title>
        <authorList>
            <person name="Copeland A."/>
            <person name="Lucas S."/>
            <person name="Lapidus A."/>
            <person name="Barry K."/>
            <person name="Detter J.C."/>
            <person name="Glavina del Rio T."/>
            <person name="Hammon N."/>
            <person name="Israni S."/>
            <person name="Dalin E."/>
            <person name="Tice H."/>
            <person name="Pitluck S."/>
            <person name="Sims D."/>
            <person name="Brettin T."/>
            <person name="Bruce D."/>
            <person name="Han C."/>
            <person name="Tapia R."/>
            <person name="Gilna P."/>
            <person name="Schmutz J."/>
            <person name="Larimer F."/>
            <person name="Land M."/>
            <person name="Hauser L."/>
            <person name="Kyrpides N."/>
            <person name="Mikhailova N."/>
            <person name="Oremland R.S."/>
            <person name="Hoeft S.E."/>
            <person name="Switzer-Blum J."/>
            <person name="Kulp T."/>
            <person name="King G."/>
            <person name="Tabita R."/>
            <person name="Witte B."/>
            <person name="Santini J.M."/>
            <person name="Basu P."/>
            <person name="Hollibaugh J.T."/>
            <person name="Xie G."/>
            <person name="Stolz J.F."/>
            <person name="Richardson P."/>
        </authorList>
    </citation>
    <scope>NUCLEOTIDE SEQUENCE [LARGE SCALE GENOMIC DNA]</scope>
    <source>
        <strain>ATCC BAA-1101 / DSM 17681 / MLHE-1</strain>
    </source>
</reference>
<feature type="chain" id="PRO_1000050809" description="D-aminoacyl-tRNA deacylase">
    <location>
        <begin position="1"/>
        <end position="150"/>
    </location>
</feature>
<feature type="short sequence motif" description="Gly-cisPro motif, important for rejection of L-amino acids" evidence="1">
    <location>
        <begin position="137"/>
        <end position="138"/>
    </location>
</feature>